<reference key="1">
    <citation type="submission" date="2008-02" db="EMBL/GenBank/DDBJ databases">
        <title>Complete sequence of Yersinia pseudotuberculosis YPIII.</title>
        <authorList>
            <consortium name="US DOE Joint Genome Institute"/>
            <person name="Copeland A."/>
            <person name="Lucas S."/>
            <person name="Lapidus A."/>
            <person name="Glavina del Rio T."/>
            <person name="Dalin E."/>
            <person name="Tice H."/>
            <person name="Bruce D."/>
            <person name="Goodwin L."/>
            <person name="Pitluck S."/>
            <person name="Munk A.C."/>
            <person name="Brettin T."/>
            <person name="Detter J.C."/>
            <person name="Han C."/>
            <person name="Tapia R."/>
            <person name="Schmutz J."/>
            <person name="Larimer F."/>
            <person name="Land M."/>
            <person name="Hauser L."/>
            <person name="Challacombe J.F."/>
            <person name="Green L."/>
            <person name="Lindler L.E."/>
            <person name="Nikolich M.P."/>
            <person name="Richardson P."/>
        </authorList>
    </citation>
    <scope>NUCLEOTIDE SEQUENCE [LARGE SCALE GENOMIC DNA]</scope>
    <source>
        <strain>YPIII</strain>
    </source>
</reference>
<accession>B1JPZ6</accession>
<comment type="catalytic activity">
    <reaction evidence="1">
        <text>(S)-malate + NAD(+) = pyruvate + CO2 + NADH</text>
        <dbReference type="Rhea" id="RHEA:12653"/>
        <dbReference type="ChEBI" id="CHEBI:15361"/>
        <dbReference type="ChEBI" id="CHEBI:15589"/>
        <dbReference type="ChEBI" id="CHEBI:16526"/>
        <dbReference type="ChEBI" id="CHEBI:57540"/>
        <dbReference type="ChEBI" id="CHEBI:57945"/>
        <dbReference type="EC" id="1.1.1.38"/>
    </reaction>
</comment>
<comment type="catalytic activity">
    <reaction evidence="1">
        <text>oxaloacetate + H(+) = pyruvate + CO2</text>
        <dbReference type="Rhea" id="RHEA:15641"/>
        <dbReference type="ChEBI" id="CHEBI:15361"/>
        <dbReference type="ChEBI" id="CHEBI:15378"/>
        <dbReference type="ChEBI" id="CHEBI:16452"/>
        <dbReference type="ChEBI" id="CHEBI:16526"/>
        <dbReference type="EC" id="1.1.1.38"/>
    </reaction>
</comment>
<comment type="cofactor">
    <cofactor evidence="1">
        <name>Mg(2+)</name>
        <dbReference type="ChEBI" id="CHEBI:18420"/>
    </cofactor>
    <cofactor evidence="1">
        <name>Mn(2+)</name>
        <dbReference type="ChEBI" id="CHEBI:29035"/>
    </cofactor>
    <text evidence="1">Divalent metal cations. Prefers magnesium or manganese.</text>
</comment>
<comment type="subunit">
    <text evidence="1">Homotetramer.</text>
</comment>
<comment type="similarity">
    <text evidence="1">Belongs to the malic enzymes family.</text>
</comment>
<name>MAO1_YERPY</name>
<proteinExistence type="inferred from homology"/>
<feature type="chain" id="PRO_1000186016" description="NAD-dependent malic enzyme">
    <location>
        <begin position="1"/>
        <end position="565"/>
    </location>
</feature>
<feature type="active site" description="Proton donor" evidence="1">
    <location>
        <position position="104"/>
    </location>
</feature>
<feature type="active site" description="Proton acceptor" evidence="1">
    <location>
        <position position="175"/>
    </location>
</feature>
<feature type="binding site" evidence="1">
    <location>
        <position position="157"/>
    </location>
    <ligand>
        <name>NAD(+)</name>
        <dbReference type="ChEBI" id="CHEBI:57540"/>
    </ligand>
</feature>
<feature type="binding site" evidence="1">
    <location>
        <position position="246"/>
    </location>
    <ligand>
        <name>a divalent metal cation</name>
        <dbReference type="ChEBI" id="CHEBI:60240"/>
    </ligand>
</feature>
<feature type="binding site" evidence="1">
    <location>
        <position position="247"/>
    </location>
    <ligand>
        <name>a divalent metal cation</name>
        <dbReference type="ChEBI" id="CHEBI:60240"/>
    </ligand>
</feature>
<feature type="binding site" evidence="1">
    <location>
        <position position="270"/>
    </location>
    <ligand>
        <name>a divalent metal cation</name>
        <dbReference type="ChEBI" id="CHEBI:60240"/>
    </ligand>
</feature>
<feature type="binding site" evidence="1">
    <location>
        <position position="270"/>
    </location>
    <ligand>
        <name>NAD(+)</name>
        <dbReference type="ChEBI" id="CHEBI:57540"/>
    </ligand>
</feature>
<feature type="binding site" evidence="1">
    <location>
        <position position="418"/>
    </location>
    <ligand>
        <name>NAD(+)</name>
        <dbReference type="ChEBI" id="CHEBI:57540"/>
    </ligand>
</feature>
<feature type="site" description="Important for activity" evidence="1">
    <location>
        <position position="270"/>
    </location>
</feature>
<organism>
    <name type="scientific">Yersinia pseudotuberculosis serotype O:3 (strain YPIII)</name>
    <dbReference type="NCBI Taxonomy" id="502800"/>
    <lineage>
        <taxon>Bacteria</taxon>
        <taxon>Pseudomonadati</taxon>
        <taxon>Pseudomonadota</taxon>
        <taxon>Gammaproteobacteria</taxon>
        <taxon>Enterobacterales</taxon>
        <taxon>Yersiniaceae</taxon>
        <taxon>Yersinia</taxon>
    </lineage>
</organism>
<gene>
    <name evidence="1" type="primary">maeA</name>
    <name type="ordered locus">YPK_2562</name>
</gene>
<evidence type="ECO:0000255" key="1">
    <source>
        <dbReference type="HAMAP-Rule" id="MF_01619"/>
    </source>
</evidence>
<sequence>MELEYESKRPLYIPYAGPILLEFPLLNKGSAFTNDERNHFNLHGLLPEAVETIEEQAERAYRQYQDFKNDDDKHIYLRNIQDTNETLFYRLLEAHLSEMMPIIYTPTVGEACEHFSDIYRRARGLFISYPNREHIDDMLQNATKQNVKVIVVTDGERILGLGDQGIGGMGIPIGKLSLYTACGGISPAYTLPVVLDVGTNNPQRLNDPLYMGWRHPRISGDEYYAFVDEFIQAVKRRWPNVLLQFEDFAQKNATPLLNRYRDELCCFNDDIQGTAAVTLGSLIAASHAAGSQLRDQTVTFLGAGSAGCGIAEQIIAQMMSEGLSEIQARARIFMVDRFGLLTDKLPNLLDFQSKLVQKSDDLHHWNLHNDAISLLDVVRNAKPTVLIGVSGQPGLFTEELIREMHSHCARPIVMPLSNPTSRVEARPEDIINWTDGAALVATGSPFPPVSYKEKLYPIAQCNNSYIFPGIGLGVLASGASRVTDGMLMAASRALAESSPLARHGEGALLPNIDDIQAVSKAIAMRVGQAAQLQGVAIVTSEEALSKAIEHNYWQPQYRSYKRTSF</sequence>
<protein>
    <recommendedName>
        <fullName evidence="1">NAD-dependent malic enzyme</fullName>
        <shortName evidence="1">NAD-ME</shortName>
        <ecNumber evidence="1">1.1.1.38</ecNumber>
    </recommendedName>
</protein>
<dbReference type="EC" id="1.1.1.38" evidence="1"/>
<dbReference type="EMBL" id="CP000950">
    <property type="protein sequence ID" value="ACA68839.1"/>
    <property type="molecule type" value="Genomic_DNA"/>
</dbReference>
<dbReference type="RefSeq" id="WP_002211968.1">
    <property type="nucleotide sequence ID" value="NZ_CP009792.1"/>
</dbReference>
<dbReference type="SMR" id="B1JPZ6"/>
<dbReference type="KEGG" id="ypy:YPK_2562"/>
<dbReference type="PATRIC" id="fig|502800.11.peg.3258"/>
<dbReference type="GO" id="GO:0005829">
    <property type="term" value="C:cytosol"/>
    <property type="evidence" value="ECO:0007669"/>
    <property type="project" value="TreeGrafter"/>
</dbReference>
<dbReference type="GO" id="GO:0004471">
    <property type="term" value="F:malate dehydrogenase (decarboxylating) (NAD+) activity"/>
    <property type="evidence" value="ECO:0007669"/>
    <property type="project" value="UniProtKB-UniRule"/>
</dbReference>
<dbReference type="GO" id="GO:0046872">
    <property type="term" value="F:metal ion binding"/>
    <property type="evidence" value="ECO:0007669"/>
    <property type="project" value="UniProtKB-KW"/>
</dbReference>
<dbReference type="GO" id="GO:0051287">
    <property type="term" value="F:NAD binding"/>
    <property type="evidence" value="ECO:0007669"/>
    <property type="project" value="InterPro"/>
</dbReference>
<dbReference type="GO" id="GO:0008948">
    <property type="term" value="F:oxaloacetate decarboxylase activity"/>
    <property type="evidence" value="ECO:0007669"/>
    <property type="project" value="UniProtKB-UniRule"/>
</dbReference>
<dbReference type="GO" id="GO:0006108">
    <property type="term" value="P:malate metabolic process"/>
    <property type="evidence" value="ECO:0007669"/>
    <property type="project" value="TreeGrafter"/>
</dbReference>
<dbReference type="CDD" id="cd05312">
    <property type="entry name" value="NAD_bind_1_malic_enz"/>
    <property type="match status" value="1"/>
</dbReference>
<dbReference type="FunFam" id="3.40.50.10380:FF:000001">
    <property type="entry name" value="NAD-dependent malic enzyme"/>
    <property type="match status" value="1"/>
</dbReference>
<dbReference type="FunFam" id="3.40.50.720:FF:000055">
    <property type="entry name" value="NAD-dependent malic enzyme"/>
    <property type="match status" value="1"/>
</dbReference>
<dbReference type="Gene3D" id="3.40.50.10380">
    <property type="entry name" value="Malic enzyme, N-terminal domain"/>
    <property type="match status" value="1"/>
</dbReference>
<dbReference type="Gene3D" id="3.40.50.720">
    <property type="entry name" value="NAD(P)-binding Rossmann-like Domain"/>
    <property type="match status" value="1"/>
</dbReference>
<dbReference type="HAMAP" id="MF_01619">
    <property type="entry name" value="NAD_malic_enz"/>
    <property type="match status" value="1"/>
</dbReference>
<dbReference type="InterPro" id="IPR046346">
    <property type="entry name" value="Aminoacid_DH-like_N_sf"/>
</dbReference>
<dbReference type="InterPro" id="IPR015884">
    <property type="entry name" value="Malic_enzyme_CS"/>
</dbReference>
<dbReference type="InterPro" id="IPR012301">
    <property type="entry name" value="Malic_N_dom"/>
</dbReference>
<dbReference type="InterPro" id="IPR037062">
    <property type="entry name" value="Malic_N_dom_sf"/>
</dbReference>
<dbReference type="InterPro" id="IPR012302">
    <property type="entry name" value="Malic_NAD-bd"/>
</dbReference>
<dbReference type="InterPro" id="IPR001891">
    <property type="entry name" value="Malic_OxRdtase"/>
</dbReference>
<dbReference type="InterPro" id="IPR036291">
    <property type="entry name" value="NAD(P)-bd_dom_sf"/>
</dbReference>
<dbReference type="InterPro" id="IPR023667">
    <property type="entry name" value="NAD_malic_enz_proteobac"/>
</dbReference>
<dbReference type="NCBIfam" id="NF010052">
    <property type="entry name" value="PRK13529.1"/>
    <property type="match status" value="1"/>
</dbReference>
<dbReference type="PANTHER" id="PTHR23406">
    <property type="entry name" value="MALIC ENZYME-RELATED"/>
    <property type="match status" value="1"/>
</dbReference>
<dbReference type="PANTHER" id="PTHR23406:SF34">
    <property type="entry name" value="NAD-DEPENDENT MALIC ENZYME, MITOCHONDRIAL"/>
    <property type="match status" value="1"/>
</dbReference>
<dbReference type="Pfam" id="PF00390">
    <property type="entry name" value="malic"/>
    <property type="match status" value="1"/>
</dbReference>
<dbReference type="Pfam" id="PF03949">
    <property type="entry name" value="Malic_M"/>
    <property type="match status" value="1"/>
</dbReference>
<dbReference type="PIRSF" id="PIRSF000106">
    <property type="entry name" value="ME"/>
    <property type="match status" value="1"/>
</dbReference>
<dbReference type="PRINTS" id="PR00072">
    <property type="entry name" value="MALOXRDTASE"/>
</dbReference>
<dbReference type="SMART" id="SM01274">
    <property type="entry name" value="malic"/>
    <property type="match status" value="1"/>
</dbReference>
<dbReference type="SMART" id="SM00919">
    <property type="entry name" value="Malic_M"/>
    <property type="match status" value="1"/>
</dbReference>
<dbReference type="SUPFAM" id="SSF53223">
    <property type="entry name" value="Aminoacid dehydrogenase-like, N-terminal domain"/>
    <property type="match status" value="1"/>
</dbReference>
<dbReference type="SUPFAM" id="SSF51735">
    <property type="entry name" value="NAD(P)-binding Rossmann-fold domains"/>
    <property type="match status" value="1"/>
</dbReference>
<dbReference type="PROSITE" id="PS00331">
    <property type="entry name" value="MALIC_ENZYMES"/>
    <property type="match status" value="1"/>
</dbReference>
<keyword id="KW-0479">Metal-binding</keyword>
<keyword id="KW-0520">NAD</keyword>
<keyword id="KW-0560">Oxidoreductase</keyword>